<gene>
    <name evidence="1" type="primary">miaB</name>
    <name type="ordered locus">sll0996</name>
</gene>
<keyword id="KW-0004">4Fe-4S</keyword>
<keyword id="KW-0963">Cytoplasm</keyword>
<keyword id="KW-0408">Iron</keyword>
<keyword id="KW-0411">Iron-sulfur</keyword>
<keyword id="KW-0479">Metal-binding</keyword>
<keyword id="KW-1185">Reference proteome</keyword>
<keyword id="KW-0949">S-adenosyl-L-methionine</keyword>
<keyword id="KW-0808">Transferase</keyword>
<keyword id="KW-0819">tRNA processing</keyword>
<reference key="1">
    <citation type="journal article" date="1996" name="DNA Res.">
        <title>Sequence analysis of the genome of the unicellular cyanobacterium Synechocystis sp. strain PCC6803. II. Sequence determination of the entire genome and assignment of potential protein-coding regions.</title>
        <authorList>
            <person name="Kaneko T."/>
            <person name="Sato S."/>
            <person name="Kotani H."/>
            <person name="Tanaka A."/>
            <person name="Asamizu E."/>
            <person name="Nakamura Y."/>
            <person name="Miyajima N."/>
            <person name="Hirosawa M."/>
            <person name="Sugiura M."/>
            <person name="Sasamoto S."/>
            <person name="Kimura T."/>
            <person name="Hosouchi T."/>
            <person name="Matsuno A."/>
            <person name="Muraki A."/>
            <person name="Nakazaki N."/>
            <person name="Naruo K."/>
            <person name="Okumura S."/>
            <person name="Shimpo S."/>
            <person name="Takeuchi C."/>
            <person name="Wada T."/>
            <person name="Watanabe A."/>
            <person name="Yamada M."/>
            <person name="Yasuda M."/>
            <person name="Tabata S."/>
        </authorList>
    </citation>
    <scope>NUCLEOTIDE SEQUENCE [LARGE SCALE GENOMIC DNA]</scope>
    <source>
        <strain>ATCC 27184 / PCC 6803 / Kazusa</strain>
    </source>
</reference>
<evidence type="ECO:0000255" key="1">
    <source>
        <dbReference type="HAMAP-Rule" id="MF_01864"/>
    </source>
</evidence>
<evidence type="ECO:0000255" key="2">
    <source>
        <dbReference type="PROSITE-ProRule" id="PRU01266"/>
    </source>
</evidence>
<sequence>MNVSHRRYHIITFGCQMNKADSERMAGILENLGMTYTDDPNQADLVLYNTCSIRDNAEQKVYSYLGRQAKRKQVEPELTLVVAGCVAQQEGEQLLRRVPELDLVMGPQHANRLDQLLEQVWAGSQVVATESLHIMEDITKPRRESTVSAWVNIIYGCNERCSYCVVPNVRGVEQSRTPEAIYGEMEVLAQQGFKEVTLLGQNIDAYGRDLPGTTPSGRHLHTLTDLLYHVHDIEGIDRLRFATSHPRYFTERLIQACQELPKVCEHFHIPFQSGDNDILKAMKRGYTREKYLQIIEKIRRYMPDAAISADVIVGFPGETEAQFENTLNLIEEVGFDLLNTAAYSPRPGTPAAFWDNQLSEEVKGDRLQRLNHLVSTQAMERSQRYLGRVEEVLVEGENLKSPGQVMGRTRGNRLTFFQGEISELLGKTVPVKITEARAFSLTGEALSLVTA</sequence>
<proteinExistence type="inferred from homology"/>
<protein>
    <recommendedName>
        <fullName evidence="1">tRNA-2-methylthio-N(6)-dimethylallyladenosine synthase</fullName>
        <ecNumber evidence="1">2.8.4.3</ecNumber>
    </recommendedName>
    <alternativeName>
        <fullName evidence="1">(Dimethylallyl)adenosine tRNA methylthiotransferase MiaB</fullName>
    </alternativeName>
    <alternativeName>
        <fullName evidence="1">tRNA-i(6)A37 methylthiotransferase</fullName>
    </alternativeName>
</protein>
<feature type="chain" id="PRO_0000141753" description="tRNA-2-methylthio-N(6)-dimethylallyladenosine synthase">
    <location>
        <begin position="1"/>
        <end position="451"/>
    </location>
</feature>
<feature type="domain" description="MTTase N-terminal" evidence="1">
    <location>
        <begin position="6"/>
        <end position="122"/>
    </location>
</feature>
<feature type="domain" description="Radical SAM core" evidence="2">
    <location>
        <begin position="143"/>
        <end position="384"/>
    </location>
</feature>
<feature type="domain" description="TRAM" evidence="1">
    <location>
        <begin position="383"/>
        <end position="447"/>
    </location>
</feature>
<feature type="binding site" evidence="1">
    <location>
        <position position="15"/>
    </location>
    <ligand>
        <name>[4Fe-4S] cluster</name>
        <dbReference type="ChEBI" id="CHEBI:49883"/>
        <label>1</label>
    </ligand>
</feature>
<feature type="binding site" evidence="1">
    <location>
        <position position="51"/>
    </location>
    <ligand>
        <name>[4Fe-4S] cluster</name>
        <dbReference type="ChEBI" id="CHEBI:49883"/>
        <label>1</label>
    </ligand>
</feature>
<feature type="binding site" evidence="1">
    <location>
        <position position="85"/>
    </location>
    <ligand>
        <name>[4Fe-4S] cluster</name>
        <dbReference type="ChEBI" id="CHEBI:49883"/>
        <label>1</label>
    </ligand>
</feature>
<feature type="binding site" evidence="1">
    <location>
        <position position="157"/>
    </location>
    <ligand>
        <name>[4Fe-4S] cluster</name>
        <dbReference type="ChEBI" id="CHEBI:49883"/>
        <label>2</label>
        <note>4Fe-4S-S-AdoMet</note>
    </ligand>
</feature>
<feature type="binding site" evidence="1">
    <location>
        <position position="161"/>
    </location>
    <ligand>
        <name>[4Fe-4S] cluster</name>
        <dbReference type="ChEBI" id="CHEBI:49883"/>
        <label>2</label>
        <note>4Fe-4S-S-AdoMet</note>
    </ligand>
</feature>
<feature type="binding site" evidence="1">
    <location>
        <position position="164"/>
    </location>
    <ligand>
        <name>[4Fe-4S] cluster</name>
        <dbReference type="ChEBI" id="CHEBI:49883"/>
        <label>2</label>
        <note>4Fe-4S-S-AdoMet</note>
    </ligand>
</feature>
<dbReference type="EC" id="2.8.4.3" evidence="1"/>
<dbReference type="EMBL" id="BA000022">
    <property type="protein sequence ID" value="BAA17153.1"/>
    <property type="molecule type" value="Genomic_DNA"/>
</dbReference>
<dbReference type="PIR" id="S75239">
    <property type="entry name" value="S75239"/>
</dbReference>
<dbReference type="SMR" id="P73127"/>
<dbReference type="FunCoup" id="P73127">
    <property type="interactions" value="484"/>
</dbReference>
<dbReference type="IntAct" id="P73127">
    <property type="interactions" value="4"/>
</dbReference>
<dbReference type="STRING" id="1148.gene:10498015"/>
<dbReference type="PaxDb" id="1148-1652230"/>
<dbReference type="EnsemblBacteria" id="BAA17153">
    <property type="protein sequence ID" value="BAA17153"/>
    <property type="gene ID" value="BAA17153"/>
</dbReference>
<dbReference type="KEGG" id="syn:sll0996"/>
<dbReference type="eggNOG" id="COG0621">
    <property type="taxonomic scope" value="Bacteria"/>
</dbReference>
<dbReference type="InParanoid" id="P73127"/>
<dbReference type="PhylomeDB" id="P73127"/>
<dbReference type="Proteomes" id="UP000001425">
    <property type="component" value="Chromosome"/>
</dbReference>
<dbReference type="GO" id="GO:0005737">
    <property type="term" value="C:cytoplasm"/>
    <property type="evidence" value="ECO:0007669"/>
    <property type="project" value="UniProtKB-SubCell"/>
</dbReference>
<dbReference type="GO" id="GO:0051539">
    <property type="term" value="F:4 iron, 4 sulfur cluster binding"/>
    <property type="evidence" value="ECO:0000318"/>
    <property type="project" value="GO_Central"/>
</dbReference>
<dbReference type="GO" id="GO:0046872">
    <property type="term" value="F:metal ion binding"/>
    <property type="evidence" value="ECO:0007669"/>
    <property type="project" value="UniProtKB-KW"/>
</dbReference>
<dbReference type="GO" id="GO:0035596">
    <property type="term" value="F:methylthiotransferase activity"/>
    <property type="evidence" value="ECO:0000318"/>
    <property type="project" value="GO_Central"/>
</dbReference>
<dbReference type="GO" id="GO:0035600">
    <property type="term" value="P:tRNA methylthiolation"/>
    <property type="evidence" value="ECO:0000318"/>
    <property type="project" value="GO_Central"/>
</dbReference>
<dbReference type="CDD" id="cd01335">
    <property type="entry name" value="Radical_SAM"/>
    <property type="match status" value="1"/>
</dbReference>
<dbReference type="FunFam" id="3.40.50.12160:FF:000006">
    <property type="entry name" value="tRNA-2-methylthio-N(6)-dimethylallyladenosine synthase"/>
    <property type="match status" value="1"/>
</dbReference>
<dbReference type="FunFam" id="3.80.30.20:FF:000001">
    <property type="entry name" value="tRNA-2-methylthio-N(6)-dimethylallyladenosine synthase 2"/>
    <property type="match status" value="1"/>
</dbReference>
<dbReference type="Gene3D" id="3.40.50.12160">
    <property type="entry name" value="Methylthiotransferase, N-terminal domain"/>
    <property type="match status" value="1"/>
</dbReference>
<dbReference type="Gene3D" id="3.80.30.20">
    <property type="entry name" value="tm_1862 like domain"/>
    <property type="match status" value="1"/>
</dbReference>
<dbReference type="HAMAP" id="MF_01864">
    <property type="entry name" value="tRNA_metthiotr_MiaB"/>
    <property type="match status" value="1"/>
</dbReference>
<dbReference type="InterPro" id="IPR006638">
    <property type="entry name" value="Elp3/MiaA/NifB-like_rSAM"/>
</dbReference>
<dbReference type="InterPro" id="IPR005839">
    <property type="entry name" value="Methylthiotransferase"/>
</dbReference>
<dbReference type="InterPro" id="IPR020612">
    <property type="entry name" value="Methylthiotransferase_CS"/>
</dbReference>
<dbReference type="InterPro" id="IPR013848">
    <property type="entry name" value="Methylthiotransferase_N"/>
</dbReference>
<dbReference type="InterPro" id="IPR038135">
    <property type="entry name" value="Methylthiotransferase_N_sf"/>
</dbReference>
<dbReference type="InterPro" id="IPR006463">
    <property type="entry name" value="MiaB_methiolase"/>
</dbReference>
<dbReference type="InterPro" id="IPR007197">
    <property type="entry name" value="rSAM"/>
</dbReference>
<dbReference type="InterPro" id="IPR023404">
    <property type="entry name" value="rSAM_horseshoe"/>
</dbReference>
<dbReference type="InterPro" id="IPR002792">
    <property type="entry name" value="TRAM_dom"/>
</dbReference>
<dbReference type="NCBIfam" id="TIGR01574">
    <property type="entry name" value="miaB-methiolase"/>
    <property type="match status" value="1"/>
</dbReference>
<dbReference type="NCBIfam" id="TIGR00089">
    <property type="entry name" value="MiaB/RimO family radical SAM methylthiotransferase"/>
    <property type="match status" value="1"/>
</dbReference>
<dbReference type="PANTHER" id="PTHR43020">
    <property type="entry name" value="CDK5 REGULATORY SUBUNIT-ASSOCIATED PROTEIN 1"/>
    <property type="match status" value="1"/>
</dbReference>
<dbReference type="PANTHER" id="PTHR43020:SF2">
    <property type="entry name" value="MITOCHONDRIAL TRNA METHYLTHIOTRANSFERASE CDK5RAP1"/>
    <property type="match status" value="1"/>
</dbReference>
<dbReference type="Pfam" id="PF04055">
    <property type="entry name" value="Radical_SAM"/>
    <property type="match status" value="1"/>
</dbReference>
<dbReference type="Pfam" id="PF01938">
    <property type="entry name" value="TRAM"/>
    <property type="match status" value="1"/>
</dbReference>
<dbReference type="Pfam" id="PF00919">
    <property type="entry name" value="UPF0004"/>
    <property type="match status" value="1"/>
</dbReference>
<dbReference type="SFLD" id="SFLDF00273">
    <property type="entry name" value="(dimethylallyl)adenosine_tRNA"/>
    <property type="match status" value="1"/>
</dbReference>
<dbReference type="SFLD" id="SFLDG01082">
    <property type="entry name" value="B12-binding_domain_containing"/>
    <property type="match status" value="1"/>
</dbReference>
<dbReference type="SFLD" id="SFLDS00029">
    <property type="entry name" value="Radical_SAM"/>
    <property type="match status" value="1"/>
</dbReference>
<dbReference type="SMART" id="SM00729">
    <property type="entry name" value="Elp3"/>
    <property type="match status" value="1"/>
</dbReference>
<dbReference type="SUPFAM" id="SSF102114">
    <property type="entry name" value="Radical SAM enzymes"/>
    <property type="match status" value="1"/>
</dbReference>
<dbReference type="PROSITE" id="PS51449">
    <property type="entry name" value="MTTASE_N"/>
    <property type="match status" value="1"/>
</dbReference>
<dbReference type="PROSITE" id="PS01278">
    <property type="entry name" value="MTTASE_RADICAL"/>
    <property type="match status" value="1"/>
</dbReference>
<dbReference type="PROSITE" id="PS51918">
    <property type="entry name" value="RADICAL_SAM"/>
    <property type="match status" value="1"/>
</dbReference>
<dbReference type="PROSITE" id="PS50926">
    <property type="entry name" value="TRAM"/>
    <property type="match status" value="1"/>
</dbReference>
<comment type="function">
    <text evidence="1">Catalyzes the methylthiolation of N6-(dimethylallyl)adenosine (i(6)A), leading to the formation of 2-methylthio-N6-(dimethylallyl)adenosine (ms(2)i(6)A) at position 37 in tRNAs that read codons beginning with uridine.</text>
</comment>
<comment type="catalytic activity">
    <reaction evidence="1">
        <text>N(6)-dimethylallyladenosine(37) in tRNA + (sulfur carrier)-SH + AH2 + 2 S-adenosyl-L-methionine = 2-methylsulfanyl-N(6)-dimethylallyladenosine(37) in tRNA + (sulfur carrier)-H + 5'-deoxyadenosine + L-methionine + A + S-adenosyl-L-homocysteine + 2 H(+)</text>
        <dbReference type="Rhea" id="RHEA:37067"/>
        <dbReference type="Rhea" id="RHEA-COMP:10375"/>
        <dbReference type="Rhea" id="RHEA-COMP:10376"/>
        <dbReference type="Rhea" id="RHEA-COMP:14737"/>
        <dbReference type="Rhea" id="RHEA-COMP:14739"/>
        <dbReference type="ChEBI" id="CHEBI:13193"/>
        <dbReference type="ChEBI" id="CHEBI:15378"/>
        <dbReference type="ChEBI" id="CHEBI:17319"/>
        <dbReference type="ChEBI" id="CHEBI:17499"/>
        <dbReference type="ChEBI" id="CHEBI:29917"/>
        <dbReference type="ChEBI" id="CHEBI:57844"/>
        <dbReference type="ChEBI" id="CHEBI:57856"/>
        <dbReference type="ChEBI" id="CHEBI:59789"/>
        <dbReference type="ChEBI" id="CHEBI:64428"/>
        <dbReference type="ChEBI" id="CHEBI:74415"/>
        <dbReference type="ChEBI" id="CHEBI:74417"/>
        <dbReference type="EC" id="2.8.4.3"/>
    </reaction>
</comment>
<comment type="cofactor">
    <cofactor evidence="1">
        <name>[4Fe-4S] cluster</name>
        <dbReference type="ChEBI" id="CHEBI:49883"/>
    </cofactor>
    <text evidence="1">Binds 2 [4Fe-4S] clusters. One cluster is coordinated with 3 cysteines and an exchangeable S-adenosyl-L-methionine.</text>
</comment>
<comment type="subunit">
    <text evidence="1">Monomer.</text>
</comment>
<comment type="subcellular location">
    <subcellularLocation>
        <location evidence="1">Cytoplasm</location>
    </subcellularLocation>
</comment>
<comment type="similarity">
    <text evidence="1">Belongs to the methylthiotransferase family. MiaB subfamily.</text>
</comment>
<name>MIAB_SYNY3</name>
<organism>
    <name type="scientific">Synechocystis sp. (strain ATCC 27184 / PCC 6803 / Kazusa)</name>
    <dbReference type="NCBI Taxonomy" id="1111708"/>
    <lineage>
        <taxon>Bacteria</taxon>
        <taxon>Bacillati</taxon>
        <taxon>Cyanobacteriota</taxon>
        <taxon>Cyanophyceae</taxon>
        <taxon>Synechococcales</taxon>
        <taxon>Merismopediaceae</taxon>
        <taxon>Synechocystis</taxon>
    </lineage>
</organism>
<accession>P73127</accession>